<organism>
    <name type="scientific">Mycobacterium tuberculosis (strain ATCC 25618 / H37Rv)</name>
    <dbReference type="NCBI Taxonomy" id="83332"/>
    <lineage>
        <taxon>Bacteria</taxon>
        <taxon>Bacillati</taxon>
        <taxon>Actinomycetota</taxon>
        <taxon>Actinomycetes</taxon>
        <taxon>Mycobacteriales</taxon>
        <taxon>Mycobacteriaceae</taxon>
        <taxon>Mycobacterium</taxon>
        <taxon>Mycobacterium tuberculosis complex</taxon>
    </lineage>
</organism>
<protein>
    <recommendedName>
        <fullName evidence="10">ESX-3 secretion system ATPase EccB3</fullName>
        <ecNumber evidence="10">3.6.-.-</ecNumber>
    </recommendedName>
    <alternativeName>
        <fullName evidence="10">ESX conserved component B3</fullName>
    </alternativeName>
    <alternativeName>
        <fullName evidence="10">Type VII secretion system protein EccB3</fullName>
        <shortName evidence="10">T7SS protein EccB3</shortName>
    </alternativeName>
</protein>
<accession>P9WNR3</accession>
<accession>L0T5Z9</accession>
<accession>O53688</accession>
<accession>Q7DA38</accession>
<gene>
    <name evidence="9" type="primary">eccB3</name>
    <name type="ordered locus">Rv0283</name>
</gene>
<evidence type="ECO:0000250" key="1">
    <source>
        <dbReference type="UniProtKB" id="B2HST3"/>
    </source>
</evidence>
<evidence type="ECO:0000250" key="2">
    <source>
        <dbReference type="UniProtKB" id="P9WNR7"/>
    </source>
</evidence>
<evidence type="ECO:0000255" key="3"/>
<evidence type="ECO:0000256" key="4">
    <source>
        <dbReference type="SAM" id="MobiDB-lite"/>
    </source>
</evidence>
<evidence type="ECO:0000269" key="5">
    <source>
    </source>
</evidence>
<evidence type="ECO:0000269" key="6">
    <source>
    </source>
</evidence>
<evidence type="ECO:0000269" key="7">
    <source>
    </source>
</evidence>
<evidence type="ECO:0000269" key="8">
    <source>
    </source>
</evidence>
<evidence type="ECO:0000303" key="9">
    <source>
    </source>
</evidence>
<evidence type="ECO:0000305" key="10"/>
<proteinExistence type="evidence at protein level"/>
<name>ECCB3_MYCTU</name>
<dbReference type="EC" id="3.6.-.-" evidence="10"/>
<dbReference type="EMBL" id="AL123456">
    <property type="protein sequence ID" value="CCP43013.1"/>
    <property type="molecule type" value="Genomic_DNA"/>
</dbReference>
<dbReference type="PIR" id="A70836">
    <property type="entry name" value="A70836"/>
</dbReference>
<dbReference type="RefSeq" id="NP_214797.1">
    <property type="nucleotide sequence ID" value="NC_000962.3"/>
</dbReference>
<dbReference type="RefSeq" id="WP_003401472.1">
    <property type="nucleotide sequence ID" value="NZ_NVQJ01000026.1"/>
</dbReference>
<dbReference type="SMR" id="P9WNR3"/>
<dbReference type="STRING" id="83332.Rv0283"/>
<dbReference type="PaxDb" id="83332-Rv0283"/>
<dbReference type="DNASU" id="886645"/>
<dbReference type="GeneID" id="886645"/>
<dbReference type="KEGG" id="mtu:Rv0283"/>
<dbReference type="KEGG" id="mtv:RVBD_0283"/>
<dbReference type="TubercuList" id="Rv0283"/>
<dbReference type="eggNOG" id="COG3266">
    <property type="taxonomic scope" value="Bacteria"/>
</dbReference>
<dbReference type="InParanoid" id="P9WNR3"/>
<dbReference type="OrthoDB" id="3847604at2"/>
<dbReference type="PhylomeDB" id="P9WNR3"/>
<dbReference type="Proteomes" id="UP000001584">
    <property type="component" value="Chromosome"/>
</dbReference>
<dbReference type="GO" id="GO:0005576">
    <property type="term" value="C:extracellular region"/>
    <property type="evidence" value="ECO:0007005"/>
    <property type="project" value="MTBBASE"/>
</dbReference>
<dbReference type="GO" id="GO:0009274">
    <property type="term" value="C:peptidoglycan-based cell wall"/>
    <property type="evidence" value="ECO:0007005"/>
    <property type="project" value="MTBBASE"/>
</dbReference>
<dbReference type="GO" id="GO:0005886">
    <property type="term" value="C:plasma membrane"/>
    <property type="evidence" value="ECO:0007005"/>
    <property type="project" value="MTBBASE"/>
</dbReference>
<dbReference type="GO" id="GO:0005524">
    <property type="term" value="F:ATP binding"/>
    <property type="evidence" value="ECO:0007669"/>
    <property type="project" value="UniProtKB-KW"/>
</dbReference>
<dbReference type="GO" id="GO:0016787">
    <property type="term" value="F:hydrolase activity"/>
    <property type="evidence" value="ECO:0007669"/>
    <property type="project" value="UniProtKB-KW"/>
</dbReference>
<dbReference type="FunFam" id="3.30.2390.20:FF:000001">
    <property type="entry name" value="ESX-1 secretion system ATPase EccB1"/>
    <property type="match status" value="1"/>
</dbReference>
<dbReference type="Gene3D" id="3.30.2390.20">
    <property type="entry name" value="Type VII secretion system EccB, repeat 1 domain"/>
    <property type="match status" value="1"/>
</dbReference>
<dbReference type="Gene3D" id="2.40.50.910">
    <property type="entry name" value="Type VII secretion system EccB, repeat 3 domain"/>
    <property type="match status" value="1"/>
</dbReference>
<dbReference type="InterPro" id="IPR007795">
    <property type="entry name" value="T7SS_EccB"/>
</dbReference>
<dbReference type="InterPro" id="IPR044857">
    <property type="entry name" value="T7SS_EccB_R1"/>
</dbReference>
<dbReference type="InterPro" id="IPR042485">
    <property type="entry name" value="T7SS_EccB_R3"/>
</dbReference>
<dbReference type="NCBIfam" id="TIGR03919">
    <property type="entry name" value="T7SS_EccB"/>
    <property type="match status" value="1"/>
</dbReference>
<dbReference type="PANTHER" id="PTHR40765">
    <property type="entry name" value="ESX-2 SECRETION SYSTEM ATPASE ECCB2"/>
    <property type="match status" value="1"/>
</dbReference>
<dbReference type="PANTHER" id="PTHR40765:SF2">
    <property type="entry name" value="ESX-2 SECRETION SYSTEM ATPASE ECCB2"/>
    <property type="match status" value="1"/>
</dbReference>
<dbReference type="Pfam" id="PF05108">
    <property type="entry name" value="T7SS_ESX1_EccB"/>
    <property type="match status" value="1"/>
</dbReference>
<comment type="function">
    <text evidence="2 7 8">An ATPase (By similarity). Part of the ESX-3 specialized secretion system, which is important for iron and zinc uptake or homeostasis.</text>
</comment>
<comment type="subunit">
    <text evidence="1">Part of the ESX-3 / type VII secretion system (T7SS), which is composed of cytosolic and membrane components. The ESX-3 membrane complex is composed of EccB3, EccC3, EccD3 and EccE3.</text>
</comment>
<comment type="subcellular location">
    <subcellularLocation>
        <location evidence="1">Cell inner membrane</location>
        <topology evidence="3">Single-pass membrane protein</topology>
    </subcellularLocation>
</comment>
<comment type="induction">
    <text evidence="5 6">Repressed by IdeR in the presence of iron and by Zur in the presence of zinc.</text>
</comment>
<comment type="similarity">
    <text evidence="10">Belongs to the EccB family.</text>
</comment>
<sequence length="538" mass="55943">MTNQQHDHDFDHDRRSFASRTPVNNNPDKVVYRRGFVTRHQVTGWRFVMRRIAAGIALHDTRMLVDPLRTQSRAVLMGVLIVITGLIGSFVFSLIRPNGQAGSNAVLADRSTAALYVRVGEQLHPVLNLTSARLIVGRPVSPTTVKSTELDQFPRGNLIGIPGAPERMVQNTSTDANWTVCDGLNAPSRGGADGVGVTVIAGPLEDTGARAAALGPGQAVLVDSGAGTWLLWDGKRSPIDLADHAVTSGLGLGADVPAPRIIASGLFNAIPEAPPLTAPIIPDAGNPASFGVPAPIGAVVSSYALKDSGKTISDTVQYYAVLPDGLQQISPVLAAILRNNNSYGLQQPPRLGADEVAKLPVSRVLDTRRYPSEPVSLVDVTRDPVTCAYWSKPVGAATSSLTLLAGSALPVPDAVHTVELVGAGNGGVATRVALAAGTGYFTQTVGGGPDAPGAGSLFWVSDTGVRYGIDNEPQGVAGGGKAVEALGLNPPPVPIPWSVLSLFVPGPTLSRADALLAHDTLVPDSRPARPVSAEGGYR</sequence>
<keyword id="KW-0067">ATP-binding</keyword>
<keyword id="KW-0997">Cell inner membrane</keyword>
<keyword id="KW-1003">Cell membrane</keyword>
<keyword id="KW-0378">Hydrolase</keyword>
<keyword id="KW-0472">Membrane</keyword>
<keyword id="KW-0547">Nucleotide-binding</keyword>
<keyword id="KW-1185">Reference proteome</keyword>
<keyword id="KW-0812">Transmembrane</keyword>
<keyword id="KW-1133">Transmembrane helix</keyword>
<keyword id="KW-0813">Transport</keyword>
<reference key="1">
    <citation type="journal article" date="1998" name="Nature">
        <title>Deciphering the biology of Mycobacterium tuberculosis from the complete genome sequence.</title>
        <authorList>
            <person name="Cole S.T."/>
            <person name="Brosch R."/>
            <person name="Parkhill J."/>
            <person name="Garnier T."/>
            <person name="Churcher C.M."/>
            <person name="Harris D.E."/>
            <person name="Gordon S.V."/>
            <person name="Eiglmeier K."/>
            <person name="Gas S."/>
            <person name="Barry C.E. III"/>
            <person name="Tekaia F."/>
            <person name="Badcock K."/>
            <person name="Basham D."/>
            <person name="Brown D."/>
            <person name="Chillingworth T."/>
            <person name="Connor R."/>
            <person name="Davies R.M."/>
            <person name="Devlin K."/>
            <person name="Feltwell T."/>
            <person name="Gentles S."/>
            <person name="Hamlin N."/>
            <person name="Holroyd S."/>
            <person name="Hornsby T."/>
            <person name="Jagels K."/>
            <person name="Krogh A."/>
            <person name="McLean J."/>
            <person name="Moule S."/>
            <person name="Murphy L.D."/>
            <person name="Oliver S."/>
            <person name="Osborne J."/>
            <person name="Quail M.A."/>
            <person name="Rajandream M.A."/>
            <person name="Rogers J."/>
            <person name="Rutter S."/>
            <person name="Seeger K."/>
            <person name="Skelton S."/>
            <person name="Squares S."/>
            <person name="Squares R."/>
            <person name="Sulston J.E."/>
            <person name="Taylor K."/>
            <person name="Whitehead S."/>
            <person name="Barrell B.G."/>
        </authorList>
    </citation>
    <scope>NUCLEOTIDE SEQUENCE [LARGE SCALE GENOMIC DNA]</scope>
    <source>
        <strain>ATCC 25618 / H37Rv</strain>
    </source>
</reference>
<reference key="2">
    <citation type="journal article" date="2002" name="Infect. Immun.">
        <title>IdeR, an essential gene in Mycobacterium tuberculosis: role of IdeR in iron-dependent gene expression, iron metabolism, and oxidative stress response.</title>
        <authorList>
            <person name="Rodriguez G.M."/>
            <person name="Voskuil M.I."/>
            <person name="Gold B."/>
            <person name="Schoolnik G.K."/>
            <person name="Smith I."/>
        </authorList>
    </citation>
    <scope>INDUCTION</scope>
</reference>
<reference key="3">
    <citation type="journal article" date="2007" name="J. Bacteriol.">
        <title>Global analysis of the Mycobacterium tuberculosis Zur (FurB) regulon.</title>
        <authorList>
            <person name="Maciag A."/>
            <person name="Dainese E."/>
            <person name="Rodriguez G.M."/>
            <person name="Milano A."/>
            <person name="Provvedi R."/>
            <person name="Pasca M.R."/>
            <person name="Smith I."/>
            <person name="Palu G."/>
            <person name="Riccardi G."/>
            <person name="Manganelli R."/>
        </authorList>
    </citation>
    <scope>INDUCTION</scope>
</reference>
<reference key="4">
    <citation type="journal article" date="2009" name="J. Bacteriol.">
        <title>Characterization of a Mycobacterium tuberculosis ESX-3 conditional mutant: essentiality and rescue by iron and zinc.</title>
        <authorList>
            <person name="Serafini A."/>
            <person name="Boldrin F."/>
            <person name="Palu G."/>
            <person name="Manganelli R."/>
        </authorList>
    </citation>
    <scope>FUNCTION</scope>
    <source>
        <strain>H37Rv</strain>
    </source>
</reference>
<reference key="5">
    <citation type="journal article" date="2009" name="PLoS Pathog.">
        <title>Systematic genetic nomenclature for type VII secretion systems.</title>
        <authorList>
            <person name="Bitter W."/>
            <person name="Houben E.N."/>
            <person name="Bottai D."/>
            <person name="Brodin P."/>
            <person name="Brown E.J."/>
            <person name="Cox J.S."/>
            <person name="Derbyshire K."/>
            <person name="Fortune S.M."/>
            <person name="Gao L.Y."/>
            <person name="Liu J."/>
            <person name="Gey van Pittius N.C."/>
            <person name="Pym A.S."/>
            <person name="Rubin E.J."/>
            <person name="Sherman D.R."/>
            <person name="Cole S.T."/>
            <person name="Brosch R."/>
        </authorList>
    </citation>
    <scope>NOMENCLATURE</scope>
</reference>
<reference key="6">
    <citation type="journal article" date="2011" name="Mol. Cell. Proteomics">
        <title>Proteogenomic analysis of Mycobacterium tuberculosis by high resolution mass spectrometry.</title>
        <authorList>
            <person name="Kelkar D.S."/>
            <person name="Kumar D."/>
            <person name="Kumar P."/>
            <person name="Balakrishnan L."/>
            <person name="Muthusamy B."/>
            <person name="Yadav A.K."/>
            <person name="Shrivastava P."/>
            <person name="Marimuthu A."/>
            <person name="Anand S."/>
            <person name="Sundaram H."/>
            <person name="Kingsbury R."/>
            <person name="Harsha H.C."/>
            <person name="Nair B."/>
            <person name="Prasad T.S."/>
            <person name="Chauhan D.S."/>
            <person name="Katoch K."/>
            <person name="Katoch V.M."/>
            <person name="Kumar P."/>
            <person name="Chaerkady R."/>
            <person name="Ramachandran S."/>
            <person name="Dash D."/>
            <person name="Pandey A."/>
        </authorList>
    </citation>
    <scope>IDENTIFICATION BY MASS SPECTROMETRY [LARGE SCALE ANALYSIS]</scope>
    <source>
        <strain>ATCC 25618 / H37Rv</strain>
    </source>
</reference>
<reference key="7">
    <citation type="journal article" date="2013" name="PLoS ONE">
        <title>The ESX-3 secretion system is necessary for iron and zinc homeostasis in Mycobacterium tuberculosis.</title>
        <authorList>
            <person name="Serafini A."/>
            <person name="Pisu D."/>
            <person name="Palu G."/>
            <person name="Rodriguez G.M."/>
            <person name="Manganelli R."/>
        </authorList>
    </citation>
    <scope>FUNCTION</scope>
</reference>
<feature type="chain" id="PRO_0000393230" description="ESX-3 secretion system ATPase EccB3">
    <location>
        <begin position="1"/>
        <end position="538"/>
    </location>
</feature>
<feature type="transmembrane region" description="Helical" evidence="3">
    <location>
        <begin position="75"/>
        <end position="95"/>
    </location>
</feature>
<feature type="region of interest" description="Disordered" evidence="4">
    <location>
        <begin position="1"/>
        <end position="25"/>
    </location>
</feature>
<feature type="compositionally biased region" description="Basic and acidic residues" evidence="4">
    <location>
        <begin position="1"/>
        <end position="16"/>
    </location>
</feature>